<sequence>MKAFYGMLVIFILCSTCYISVDSQIDTNVKCSGSSKCVKICIDRYNTRGAKCINGRCTCYP</sequence>
<name>KA156_TITDI</name>
<proteinExistence type="evidence at protein level"/>
<feature type="signal peptide" evidence="2">
    <location>
        <begin position="1"/>
        <end position="23"/>
    </location>
</feature>
<feature type="chain" id="PRO_0000224192" description="Potassium channel toxin alpha-KTx 15.6" evidence="2">
    <location>
        <begin position="24"/>
        <end position="61"/>
    </location>
</feature>
<feature type="site" description="Basic residue of the functional dyad" evidence="1">
    <location>
        <position position="51"/>
    </location>
</feature>
<feature type="site" description="Aromatic residue of the functional dyad" evidence="1">
    <location>
        <position position="60"/>
    </location>
</feature>
<feature type="modified residue" description="Pyrrolidone carboxylic acid" evidence="2 3">
    <location>
        <position position="24"/>
    </location>
</feature>
<feature type="disulfide bond" evidence="3 11">
    <location>
        <begin position="31"/>
        <end position="52"/>
    </location>
</feature>
<feature type="disulfide bond" evidence="3 11">
    <location>
        <begin position="37"/>
        <end position="57"/>
    </location>
</feature>
<feature type="disulfide bond" evidence="3 11">
    <location>
        <begin position="41"/>
        <end position="59"/>
    </location>
</feature>
<feature type="mutagenesis site" description="Large increase in blocking A-type potassium currents (IC(50)=51 nM) (keeps irreversible activity). No change in activity towards hERG currents." evidence="5 6">
    <original>V</original>
    <variation>K</variation>
    <location>
        <position position="29"/>
    </location>
</feature>
<feature type="mutagenesis site" description="Decrease in blocking A-type potassium currents (IC(50)=335 nM). Decrease in blocking A-type potassium currents (IC(50)=235 nM); when associated with K-43. Decrease in blocking A-type potassium currents (IC(50)=335 nM). Large decrease in blocking A-type potassium currents (IC(50)=764 nM); when associated with K-43 and V-44. Blocks hERG currents by 18.5% at 2.4 uM. No change in activity towards hERG currents; when associated with K-43. Blocks hERG currents with an IC(50)=3.5 uM; when associated with K-43 and V-44." evidence="5 6">
    <original>I</original>
    <variation>R</variation>
    <location>
        <position position="42"/>
    </location>
</feature>
<feature type="mutagenesis site" description="Increase in blocking A-type potassium currents (IC(50)=96 nM). Decrease in blocking A-type potassium currents (IC(50)=335 nM). Decrease in blocking A-type potassium currents (IC(50)=235 nM); when associated with R-42. Large decrease in blocking A-type potassium currents (IC(50)=764 nM); when associated with R-42 and V-44. Blocks hERG currents by 20.2% at 2.4 uM. No change in activity towards hERG currents; when associated with R-42. Blocks hERG currents with an IC(50)=3.5 uM; when associated with R-42 and V-44." evidence="5 6">
    <original>D</original>
    <variation>K</variation>
    <location>
        <position position="43"/>
    </location>
</feature>
<feature type="mutagenesis site" description="Large decrease in blocking A-type potassium currents (IC(50)=764 nM); when associated with R-42 and K-43. Blocks hERG currents with an IC(50)=3.5 uM; when associated with R-42 and K-43." evidence="5 6">
    <original>R</original>
    <variation>V</variation>
    <location>
        <position position="44"/>
    </location>
</feature>
<feature type="mutagenesis site" description="Decrease in blocking A-type potassium currents (IC(50)=261 nM)." evidence="5">
    <original>T</original>
    <variation>V</variation>
    <location>
        <position position="58"/>
    </location>
</feature>
<feature type="strand" evidence="12">
    <location>
        <begin position="25"/>
        <end position="30"/>
    </location>
</feature>
<feature type="helix" evidence="12">
    <location>
        <begin position="34"/>
        <end position="44"/>
    </location>
</feature>
<feature type="strand" evidence="12">
    <location>
        <begin position="50"/>
        <end position="59"/>
    </location>
</feature>
<accession>P84777</accession>
<accession>C9X4J2</accession>
<protein>
    <recommendedName>
        <fullName evidence="8">Potassium channel toxin alpha-KTx 15.6</fullName>
    </recommendedName>
    <alternativeName>
        <fullName evidence="8">Discrepin</fullName>
    </alternativeName>
</protein>
<evidence type="ECO:0000250" key="1"/>
<evidence type="ECO:0000269" key="2">
    <source>
    </source>
</evidence>
<evidence type="ECO:0000269" key="3">
    <source>
    </source>
</evidence>
<evidence type="ECO:0000269" key="4">
    <source>
    </source>
</evidence>
<evidence type="ECO:0000269" key="5">
    <source>
    </source>
</evidence>
<evidence type="ECO:0000269" key="6">
    <source>
    </source>
</evidence>
<evidence type="ECO:0000269" key="7">
    <source>
    </source>
</evidence>
<evidence type="ECO:0000303" key="8">
    <source>
    </source>
</evidence>
<evidence type="ECO:0000305" key="9"/>
<evidence type="ECO:0000305" key="10">
    <source>
    </source>
</evidence>
<evidence type="ECO:0000312" key="11">
    <source>
        <dbReference type="PDB" id="2AXK"/>
    </source>
</evidence>
<evidence type="ECO:0007829" key="12">
    <source>
        <dbReference type="PDB" id="2AXK"/>
    </source>
</evidence>
<comment type="function">
    <text evidence="2 5 7">Irreversibly blocks the A-type voltage-gated potassium channels in rat cerebellum granular cells (190 nM induce 50% inhibitory effect) (IC(50)=190 nM) (PubMed:15369825, PubMed:18280256). Also weakly inhibits Kv1.2/KCNA2 and Kv1.3/KCNA3 (PubMed:29483648).</text>
</comment>
<comment type="subcellular location">
    <subcellularLocation>
        <location evidence="2">Secreted</location>
    </subcellularLocation>
</comment>
<comment type="tissue specificity">
    <text evidence="10">Expressed by the venom gland.</text>
</comment>
<comment type="domain">
    <text evidence="3">Has the structural arrangement of an alpha-helix connected to a beta-sheet by disulfide bonds (CSalpha/beta).</text>
</comment>
<comment type="mass spectrometry"/>
<comment type="miscellaneous">
    <text evidence="6">Negative results: does not block ERG1/Kv11.1/KCNH2 currents.</text>
</comment>
<comment type="similarity">
    <text evidence="9">Belongs to the short scorpion toxin superfamily. Potassium channel inhibitor family. Alpha-KTx 15 subfamily.</text>
</comment>
<organism>
    <name type="scientific">Tityus discrepans</name>
    <name type="common">Venezuelan scorpion</name>
    <dbReference type="NCBI Taxonomy" id="57059"/>
    <lineage>
        <taxon>Eukaryota</taxon>
        <taxon>Metazoa</taxon>
        <taxon>Ecdysozoa</taxon>
        <taxon>Arthropoda</taxon>
        <taxon>Chelicerata</taxon>
        <taxon>Arachnida</taxon>
        <taxon>Scorpiones</taxon>
        <taxon>Buthida</taxon>
        <taxon>Buthoidea</taxon>
        <taxon>Buthidae</taxon>
        <taxon>Tityus</taxon>
    </lineage>
</organism>
<reference key="1">
    <citation type="journal article" date="2009" name="Biochimie">
        <title>Molecular cloning and nucleotide sequence analysis of genes from a cDNA library of the scorpion Tityus discrepans.</title>
        <authorList>
            <person name="D'Suze G."/>
            <person name="Schwartz E.F."/>
            <person name="Garcia-Gomez B.I."/>
            <person name="Sevcik C."/>
            <person name="Possani L.D."/>
        </authorList>
    </citation>
    <scope>NUCLEOTIDE SEQUENCE [MRNA]</scope>
    <source>
        <tissue>Venom gland</tissue>
    </source>
</reference>
<reference key="2">
    <citation type="journal article" date="2004" name="Arch. Biochem. Biophys.">
        <title>Discrepin, a new peptide of the sub-family alpha-ktx15, isolated from the scorpion Tityus discrepans irreversibly blocks K+ -channels (IA currents) of cerebellum granular cells.</title>
        <authorList>
            <person name="D'Suze G."/>
            <person name="Batista C.V.F."/>
            <person name="Frau A."/>
            <person name="Murgia A.R."/>
            <person name="Zamudio F.Z."/>
            <person name="Sevcik C."/>
            <person name="Possani L.D."/>
            <person name="Prestipino G."/>
        </authorList>
    </citation>
    <scope>PROTEIN SEQUENCE OF 24-61</scope>
    <scope>FUNCTION</scope>
    <scope>SUBCELLULAR LOCATION</scope>
    <scope>PYROGLUTAMATE FORMATION AT GLN-24</scope>
    <scope>NOMENCLATURE</scope>
    <source>
        <tissue>Venom</tissue>
    </source>
</reference>
<reference key="3">
    <citation type="journal article" date="2006" name="Proteomics">
        <title>Proteomic analysis of Tityus discrepans scorpion venom and amino acid sequence of novel toxins.</title>
        <authorList>
            <person name="Batista C.V.F."/>
            <person name="D'Suze G."/>
            <person name="Gomez-Lagunas F."/>
            <person name="Zamudio F.Z."/>
            <person name="Encarnacion S."/>
            <person name="Sevcik C."/>
            <person name="Possani L.D."/>
        </authorList>
    </citation>
    <scope>PROTEIN SEQUENCE OF 24-33</scope>
    <scope>MASS SPECTROMETRY</scope>
    <source>
        <tissue>Venom</tissue>
    </source>
</reference>
<reference key="4">
    <citation type="journal article" date="2008" name="Biochim. Biophys. Acta">
        <title>A positive charge at the N-terminal segment of discrepin increases the blocking effect of K+ channels responsible for the IA currents in cerebellum granular cells.</title>
        <authorList>
            <person name="Romeo S."/>
            <person name="Corzo G."/>
            <person name="Vasile A."/>
            <person name="Satake H."/>
            <person name="Prestipino G."/>
            <person name="Possani L.D."/>
        </authorList>
    </citation>
    <scope>MUTAGENESIS OF VAL-29; ILE-42; ASP-43; ARG-44 AND THR-58</scope>
    <scope>SYNTHESIS OF 24-61</scope>
</reference>
<reference key="5">
    <citation type="journal article" date="2008" name="Biochem. Pharmacol.">
        <title>A common 'hot spot' confers hERG blockade activity to alpha-scorpion toxins affecting K+ channels.</title>
        <authorList>
            <person name="Abdel-Mottaleb Y."/>
            <person name="Corzo G."/>
            <person name="Martin-Eauclaire M.F."/>
            <person name="Satake H."/>
            <person name="Ceard B."/>
            <person name="Peigneur S."/>
            <person name="Nambaru P."/>
            <person name="Bougis P.E."/>
            <person name="Possani L.D."/>
            <person name="Tytgat J."/>
        </authorList>
    </citation>
    <scope>MUTAGENESIS OF VAL-29; ILE-42; ASP-43 AND ARG-44</scope>
</reference>
<reference key="6">
    <citation type="journal article" date="2018" name="Nat. Struct. Mol. Biol.">
        <title>Screening, large-scale production and structure-based classification of cystine-dense peptides.</title>
        <authorList>
            <person name="Correnti C.E."/>
            <person name="Gewe M.M."/>
            <person name="Mehlin C."/>
            <person name="Bandaranayake A.D."/>
            <person name="Johnsen W.A."/>
            <person name="Rupert P.B."/>
            <person name="Brusniak M.Y."/>
            <person name="Clarke M."/>
            <person name="Burke S.E."/>
            <person name="De Van Der Schueren W."/>
            <person name="Pilat K."/>
            <person name="Turnbaugh S.M."/>
            <person name="May D."/>
            <person name="Watson A."/>
            <person name="Chan M.K."/>
            <person name="Bahl C.D."/>
            <person name="Olson J.M."/>
            <person name="Strong R.K."/>
        </authorList>
    </citation>
    <scope>FUNCTION</scope>
    <scope>SYNTHESIS OF 24-61</scope>
</reference>
<reference key="7">
    <citation type="journal article" date="2006" name="Biochemistry">
        <title>Solution structure of discrepin, a new K+-channel blocking peptide from the alpha-KTx15 subfamily.</title>
        <authorList>
            <person name="Prochnicka-Chalufour A."/>
            <person name="Corzo G."/>
            <person name="Satake H."/>
            <person name="Martin-Eauclaire M.-F."/>
            <person name="Murgia A.R."/>
            <person name="Prestipino G."/>
            <person name="D'Suze G."/>
            <person name="Possani L.D."/>
            <person name="Delepierre M."/>
        </authorList>
    </citation>
    <scope>STRUCTURE BY NMR OF 24-61</scope>
    <scope>DISULFIDE BONDS</scope>
    <scope>SYNTHESIS OF 24-61</scope>
    <scope>MUTAGENESIS OF THR-58</scope>
    <scope>PYROGLUTAMATE FORMATION AT GLN-24</scope>
    <source>
        <tissue>Venom</tissue>
    </source>
</reference>
<keyword id="KW-0002">3D-structure</keyword>
<keyword id="KW-0903">Direct protein sequencing</keyword>
<keyword id="KW-1015">Disulfide bond</keyword>
<keyword id="KW-0872">Ion channel impairing toxin</keyword>
<keyword id="KW-0528">Neurotoxin</keyword>
<keyword id="KW-0632">Potassium channel impairing toxin</keyword>
<keyword id="KW-0873">Pyrrolidone carboxylic acid</keyword>
<keyword id="KW-0964">Secreted</keyword>
<keyword id="KW-0732">Signal</keyword>
<keyword id="KW-0800">Toxin</keyword>
<keyword id="KW-1220">Voltage-gated potassium channel impairing toxin</keyword>
<dbReference type="EMBL" id="FN392270">
    <property type="protein sequence ID" value="CAY61912.1"/>
    <property type="molecule type" value="mRNA"/>
</dbReference>
<dbReference type="PDB" id="2AXK">
    <property type="method" value="NMR"/>
    <property type="chains" value="A=25-61"/>
</dbReference>
<dbReference type="PDBsum" id="2AXK"/>
<dbReference type="BMRB" id="P84777"/>
<dbReference type="SMR" id="P84777"/>
<dbReference type="TCDB" id="8.B.8.1.1">
    <property type="family name" value="the Alpha-ktx15 scorpion toxin (Alpha-ktx15) family"/>
</dbReference>
<dbReference type="EvolutionaryTrace" id="P84777"/>
<dbReference type="GO" id="GO:0005576">
    <property type="term" value="C:extracellular region"/>
    <property type="evidence" value="ECO:0000314"/>
    <property type="project" value="UniProtKB"/>
</dbReference>
<dbReference type="GO" id="GO:0019870">
    <property type="term" value="F:potassium channel inhibitor activity"/>
    <property type="evidence" value="ECO:0000314"/>
    <property type="project" value="UniProtKB"/>
</dbReference>
<dbReference type="GO" id="GO:0090729">
    <property type="term" value="F:toxin activity"/>
    <property type="evidence" value="ECO:0000314"/>
    <property type="project" value="UniProtKB"/>
</dbReference>
<dbReference type="GO" id="GO:0044562">
    <property type="term" value="P:envenomation resulting in negative regulation of voltage-gated potassium channel activity in another organism"/>
    <property type="evidence" value="ECO:0000314"/>
    <property type="project" value="UniProtKB"/>
</dbReference>
<dbReference type="GO" id="GO:0044477">
    <property type="term" value="P:venom-mediated suppression of platelet aggregation"/>
    <property type="evidence" value="ECO:0000314"/>
    <property type="project" value="CACAO"/>
</dbReference>
<dbReference type="FunFam" id="3.30.30.10:FF:000009">
    <property type="entry name" value="Potassium channel toxin alpha-KTx 4.3"/>
    <property type="match status" value="1"/>
</dbReference>
<dbReference type="Gene3D" id="3.30.30.10">
    <property type="entry name" value="Knottin, scorpion toxin-like"/>
    <property type="match status" value="1"/>
</dbReference>
<dbReference type="InterPro" id="IPR036574">
    <property type="entry name" value="Scorpion_toxin-like_sf"/>
</dbReference>
<dbReference type="InterPro" id="IPR001947">
    <property type="entry name" value="Scorpion_toxinS_K_inh"/>
</dbReference>
<dbReference type="Pfam" id="PF00451">
    <property type="entry name" value="Toxin_2"/>
    <property type="match status" value="1"/>
</dbReference>
<dbReference type="SUPFAM" id="SSF57095">
    <property type="entry name" value="Scorpion toxin-like"/>
    <property type="match status" value="1"/>
</dbReference>
<dbReference type="PROSITE" id="PS01138">
    <property type="entry name" value="SCORP_SHORT_TOXIN"/>
    <property type="match status" value="1"/>
</dbReference>